<accession>P72300</accession>
<organism>
    <name type="scientific">Rhizobium meliloti</name>
    <name type="common">Ensifer meliloti</name>
    <name type="synonym">Sinorhizobium meliloti</name>
    <dbReference type="NCBI Taxonomy" id="382"/>
    <lineage>
        <taxon>Bacteria</taxon>
        <taxon>Pseudomonadati</taxon>
        <taxon>Pseudomonadota</taxon>
        <taxon>Alphaproteobacteria</taxon>
        <taxon>Hyphomicrobiales</taxon>
        <taxon>Rhizobiaceae</taxon>
        <taxon>Sinorhizobium/Ensifer group</taxon>
        <taxon>Sinorhizobium</taxon>
    </lineage>
</organism>
<protein>
    <recommendedName>
        <fullName>Opine oxidase subunit A</fullName>
        <ecNumber>1.-.-.-</ecNumber>
    </recommendedName>
    <alternativeName>
        <fullName>Octopine oxidase subunit A</fullName>
    </alternativeName>
</protein>
<reference key="1">
    <citation type="submission" date="1996-08" db="EMBL/GenBank/DDBJ databases">
        <title>The octopine catabolism operon of Rhizobium meliloti A3.</title>
        <authorList>
            <person name="Au S."/>
            <person name="Bergeron J."/>
            <person name="Dion P."/>
        </authorList>
    </citation>
    <scope>NUCLEOTIDE SEQUENCE [GENOMIC DNA]</scope>
    <source>
        <strain>A3</strain>
    </source>
</reference>
<dbReference type="EC" id="1.-.-.-"/>
<dbReference type="EMBL" id="U66830">
    <property type="protein sequence ID" value="AAB07523.1"/>
    <property type="molecule type" value="Genomic_DNA"/>
</dbReference>
<dbReference type="SMR" id="P72300"/>
<dbReference type="UniPathway" id="UPA00737"/>
<dbReference type="GO" id="GO:0051537">
    <property type="term" value="F:2 iron, 2 sulfur cluster binding"/>
    <property type="evidence" value="ECO:0007669"/>
    <property type="project" value="UniProtKB-KW"/>
</dbReference>
<dbReference type="GO" id="GO:0046872">
    <property type="term" value="F:metal ion binding"/>
    <property type="evidence" value="ECO:0007669"/>
    <property type="project" value="UniProtKB-KW"/>
</dbReference>
<dbReference type="GO" id="GO:0016491">
    <property type="term" value="F:oxidoreductase activity"/>
    <property type="evidence" value="ECO:0007669"/>
    <property type="project" value="UniProtKB-KW"/>
</dbReference>
<dbReference type="CDD" id="cd19946">
    <property type="entry name" value="GlpA-like_Fer2_BFD-like"/>
    <property type="match status" value="1"/>
</dbReference>
<dbReference type="Gene3D" id="1.10.10.1100">
    <property type="entry name" value="BFD-like [2Fe-2S]-binding domain"/>
    <property type="match status" value="1"/>
</dbReference>
<dbReference type="Gene3D" id="3.50.50.60">
    <property type="entry name" value="FAD/NAD(P)-binding domain"/>
    <property type="match status" value="2"/>
</dbReference>
<dbReference type="InterPro" id="IPR007419">
    <property type="entry name" value="BFD-like_2Fe2S-bd_dom"/>
</dbReference>
<dbReference type="InterPro" id="IPR041854">
    <property type="entry name" value="BFD-like_2Fe2S-bd_dom_sf"/>
</dbReference>
<dbReference type="InterPro" id="IPR036188">
    <property type="entry name" value="FAD/NAD-bd_sf"/>
</dbReference>
<dbReference type="InterPro" id="IPR023753">
    <property type="entry name" value="FAD/NAD-binding_dom"/>
</dbReference>
<dbReference type="InterPro" id="IPR051691">
    <property type="entry name" value="Metab_Enz_Cyan_OpOx_G3PDH"/>
</dbReference>
<dbReference type="InterPro" id="IPR017224">
    <property type="entry name" value="Opine_Oxase_asu/HCN_bsu"/>
</dbReference>
<dbReference type="PANTHER" id="PTHR42949">
    <property type="entry name" value="ANAEROBIC GLYCEROL-3-PHOSPHATE DEHYDROGENASE SUBUNIT B"/>
    <property type="match status" value="1"/>
</dbReference>
<dbReference type="PANTHER" id="PTHR42949:SF3">
    <property type="entry name" value="ANAEROBIC GLYCEROL-3-PHOSPHATE DEHYDROGENASE SUBUNIT B"/>
    <property type="match status" value="1"/>
</dbReference>
<dbReference type="Pfam" id="PF04324">
    <property type="entry name" value="Fer2_BFD"/>
    <property type="match status" value="1"/>
</dbReference>
<dbReference type="Pfam" id="PF07992">
    <property type="entry name" value="Pyr_redox_2"/>
    <property type="match status" value="1"/>
</dbReference>
<dbReference type="PIRSF" id="PIRSF037495">
    <property type="entry name" value="Opine_OX_OoxA/HcnB"/>
    <property type="match status" value="1"/>
</dbReference>
<dbReference type="PRINTS" id="PR00368">
    <property type="entry name" value="FADPNR"/>
</dbReference>
<dbReference type="PRINTS" id="PR00469">
    <property type="entry name" value="PNDRDTASEII"/>
</dbReference>
<dbReference type="SUPFAM" id="SSF51905">
    <property type="entry name" value="FAD/NAD(P)-binding domain"/>
    <property type="match status" value="1"/>
</dbReference>
<gene>
    <name type="primary">ooxA</name>
</gene>
<sequence>MTLREVSTASDLREFYDVLISGAGPAGMTAALEASAAGARVAVLDENPRPGGQIYRDITRNRPERKSYLGPDYWKGKQLAEVFDRSTIDYAPRATVWSLEGRDETVAKVRNVVGVTVGGSARMIEADAVVLATGAQERPMPVPGWTLQRVMTAGAAQIALKAAGAMPSEPIVLAGCGPLLYLLASQLIDAGVSDLTVLDTAQSTFRMSVLRHMPEFLRSPYVLKGIRLLFKVKCQACVVSGVRSIAITGSERAEGVRFTTAGGEQAIPASSVLLHQGVIPSTNLTNAAGCELRWNDEQRAFEPVTDNEGRSSRQGIYVAGDGSGIAGAQAAEVSGRIAALAALCDLGLVSVTAVAARLKPLHKQARRFLRGRAFLDALYTPRSSFLAPLNPETVVCRCEEITVRKIREAIALRPPGPNQLKTFLRCGMGQCQGRLCAATVTEIMAEERKVSPADVGTYRLRSPVKPVRLAELAQLPHTARALKAVTGRDPVDHDTNETGHISCPDTDIASCGQVQRRRPTSAGIVA</sequence>
<name>OOXA_RHIML</name>
<keyword id="KW-0001">2Fe-2S</keyword>
<keyword id="KW-0408">Iron</keyword>
<keyword id="KW-0411">Iron-sulfur</keyword>
<keyword id="KW-0479">Metal-binding</keyword>
<keyword id="KW-0560">Oxidoreductase</keyword>
<comment type="function">
    <text evidence="1">Oxidative cleavage of octopine into L-arginine and pyruvate.</text>
</comment>
<comment type="cofactor">
    <cofactor evidence="2">
        <name>[2Fe-2S] cluster</name>
        <dbReference type="ChEBI" id="CHEBI:190135"/>
    </cofactor>
    <text evidence="2">Binds 1 [2Fe-2S] cluster per subunit.</text>
</comment>
<comment type="pathway">
    <text>Opine metabolism; octopine degradation.</text>
</comment>
<comment type="subunit">
    <text>Heterodimer of a subunit A and a subunit B.</text>
</comment>
<comment type="similarity">
    <text evidence="3">To T-protein and to dimethylglycine dehydrogenase.</text>
</comment>
<proteinExistence type="inferred from homology"/>
<evidence type="ECO:0000250" key="1"/>
<evidence type="ECO:0000250" key="2">
    <source>
        <dbReference type="UniProtKB" id="P05340"/>
    </source>
</evidence>
<evidence type="ECO:0000305" key="3"/>
<feature type="chain" id="PRO_0000058051" description="Opine oxidase subunit A">
    <location>
        <begin position="1"/>
        <end position="526"/>
    </location>
</feature>
<feature type="binding site" evidence="2">
    <location>
        <position position="396"/>
    </location>
    <ligand>
        <name>[2Fe-2S] cluster</name>
        <dbReference type="ChEBI" id="CHEBI:190135"/>
    </ligand>
</feature>
<feature type="binding site" evidence="2">
    <location>
        <position position="398"/>
    </location>
    <ligand>
        <name>[2Fe-2S] cluster</name>
        <dbReference type="ChEBI" id="CHEBI:190135"/>
    </ligand>
</feature>
<feature type="binding site" evidence="2">
    <location>
        <position position="431"/>
    </location>
    <ligand>
        <name>[2Fe-2S] cluster</name>
        <dbReference type="ChEBI" id="CHEBI:190135"/>
    </ligand>
</feature>
<feature type="binding site" evidence="2">
    <location>
        <position position="436"/>
    </location>
    <ligand>
        <name>[2Fe-2S] cluster</name>
        <dbReference type="ChEBI" id="CHEBI:190135"/>
    </ligand>
</feature>